<keyword id="KW-0963">Cytoplasm</keyword>
<keyword id="KW-0369">Histidine metabolism</keyword>
<keyword id="KW-0378">Hydrolase</keyword>
<keyword id="KW-0408">Iron</keyword>
<keyword id="KW-0479">Metal-binding</keyword>
<keyword id="KW-0862">Zinc</keyword>
<organism>
    <name type="scientific">Acinetobacter baumannii (strain AB0057)</name>
    <dbReference type="NCBI Taxonomy" id="480119"/>
    <lineage>
        <taxon>Bacteria</taxon>
        <taxon>Pseudomonadati</taxon>
        <taxon>Pseudomonadota</taxon>
        <taxon>Gammaproteobacteria</taxon>
        <taxon>Moraxellales</taxon>
        <taxon>Moraxellaceae</taxon>
        <taxon>Acinetobacter</taxon>
        <taxon>Acinetobacter calcoaceticus/baumannii complex</taxon>
    </lineage>
</organism>
<comment type="function">
    <text evidence="1">Catalyzes the hydrolytic cleavage of the carbon-nitrogen bond in imidazolone-5-propanoate to yield N-formimidoyl-L-glutamate. It is the third step in the universal histidine degradation pathway.</text>
</comment>
<comment type="catalytic activity">
    <reaction evidence="1">
        <text>4-imidazolone-5-propanoate + H2O = N-formimidoyl-L-glutamate</text>
        <dbReference type="Rhea" id="RHEA:23660"/>
        <dbReference type="ChEBI" id="CHEBI:15377"/>
        <dbReference type="ChEBI" id="CHEBI:58928"/>
        <dbReference type="ChEBI" id="CHEBI:77893"/>
        <dbReference type="EC" id="3.5.2.7"/>
    </reaction>
</comment>
<comment type="cofactor">
    <cofactor evidence="1">
        <name>Zn(2+)</name>
        <dbReference type="ChEBI" id="CHEBI:29105"/>
    </cofactor>
    <cofactor evidence="1">
        <name>Fe(3+)</name>
        <dbReference type="ChEBI" id="CHEBI:29034"/>
    </cofactor>
    <text evidence="1">Binds 1 zinc or iron ion per subunit.</text>
</comment>
<comment type="pathway">
    <text evidence="1">Amino-acid degradation; L-histidine degradation into L-glutamate; N-formimidoyl-L-glutamate from L-histidine: step 3/3.</text>
</comment>
<comment type="subcellular location">
    <subcellularLocation>
        <location evidence="1">Cytoplasm</location>
    </subcellularLocation>
</comment>
<comment type="similarity">
    <text evidence="1">Belongs to the metallo-dependent hydrolases superfamily. HutI family.</text>
</comment>
<accession>B7I268</accession>
<gene>
    <name evidence="1" type="primary">hutI</name>
    <name type="ordered locus">AB57_3857</name>
</gene>
<proteinExistence type="inferred from homology"/>
<sequence>MKKLWQNCHIATMQNGQYSYIEDAAIVTEGHLIHWIGKQQQLPADTYSETVDLNGAWVTPGFIDCHTHSVFGGNRSVEFEKRLQGVSYAEIAASGGGIASTVRATREASEEQLLNSALKRIRCMQQDGVTTIEIKSGYGLNYENERKMLRVIRQIGEKLPMTVKSTCLAAHALPPEYKDQSDAYIEHICTEMLPKLHAEGLVDAVDAFCEHLAFSPAQVERVFKTAQSLGLPVKLHAEQLSSLGGSSLAARYHALSADHLEYMTEDDVKAMAESGTVAVLLPGAFYLLRETQYPPIESLIKHGVRIALSSDLNPGTSPALSLRLILNMGSTLFRLTPEQALAGITIHAAQALGLEQTHGSLEQGKVADFVAWDIEHPSEIVYWLGGDLPKRVVQHGQEVIF</sequence>
<name>HUTI_ACIB5</name>
<evidence type="ECO:0000255" key="1">
    <source>
        <dbReference type="HAMAP-Rule" id="MF_00372"/>
    </source>
</evidence>
<feature type="chain" id="PRO_1000121524" description="Imidazolonepropionase">
    <location>
        <begin position="1"/>
        <end position="401"/>
    </location>
</feature>
<feature type="binding site" evidence="1">
    <location>
        <position position="66"/>
    </location>
    <ligand>
        <name>Fe(3+)</name>
        <dbReference type="ChEBI" id="CHEBI:29034"/>
    </ligand>
</feature>
<feature type="binding site" evidence="1">
    <location>
        <position position="66"/>
    </location>
    <ligand>
        <name>Zn(2+)</name>
        <dbReference type="ChEBI" id="CHEBI:29105"/>
    </ligand>
</feature>
<feature type="binding site" evidence="1">
    <location>
        <position position="68"/>
    </location>
    <ligand>
        <name>Fe(3+)</name>
        <dbReference type="ChEBI" id="CHEBI:29034"/>
    </ligand>
</feature>
<feature type="binding site" evidence="1">
    <location>
        <position position="68"/>
    </location>
    <ligand>
        <name>Zn(2+)</name>
        <dbReference type="ChEBI" id="CHEBI:29105"/>
    </ligand>
</feature>
<feature type="binding site" evidence="1">
    <location>
        <position position="75"/>
    </location>
    <ligand>
        <name>4-imidazolone-5-propanoate</name>
        <dbReference type="ChEBI" id="CHEBI:77893"/>
    </ligand>
</feature>
<feature type="binding site" evidence="1">
    <location>
        <position position="138"/>
    </location>
    <ligand>
        <name>4-imidazolone-5-propanoate</name>
        <dbReference type="ChEBI" id="CHEBI:77893"/>
    </ligand>
</feature>
<feature type="binding site" evidence="1">
    <location>
        <position position="138"/>
    </location>
    <ligand>
        <name>N-formimidoyl-L-glutamate</name>
        <dbReference type="ChEBI" id="CHEBI:58928"/>
    </ligand>
</feature>
<feature type="binding site" evidence="1">
    <location>
        <position position="171"/>
    </location>
    <ligand>
        <name>4-imidazolone-5-propanoate</name>
        <dbReference type="ChEBI" id="CHEBI:77893"/>
    </ligand>
</feature>
<feature type="binding site" evidence="1">
    <location>
        <position position="236"/>
    </location>
    <ligand>
        <name>Fe(3+)</name>
        <dbReference type="ChEBI" id="CHEBI:29034"/>
    </ligand>
</feature>
<feature type="binding site" evidence="1">
    <location>
        <position position="236"/>
    </location>
    <ligand>
        <name>Zn(2+)</name>
        <dbReference type="ChEBI" id="CHEBI:29105"/>
    </ligand>
</feature>
<feature type="binding site" evidence="1">
    <location>
        <position position="239"/>
    </location>
    <ligand>
        <name>4-imidazolone-5-propanoate</name>
        <dbReference type="ChEBI" id="CHEBI:77893"/>
    </ligand>
</feature>
<feature type="binding site" evidence="1">
    <location>
        <position position="311"/>
    </location>
    <ligand>
        <name>Fe(3+)</name>
        <dbReference type="ChEBI" id="CHEBI:29034"/>
    </ligand>
</feature>
<feature type="binding site" evidence="1">
    <location>
        <position position="311"/>
    </location>
    <ligand>
        <name>Zn(2+)</name>
        <dbReference type="ChEBI" id="CHEBI:29105"/>
    </ligand>
</feature>
<feature type="binding site" evidence="1">
    <location>
        <position position="313"/>
    </location>
    <ligand>
        <name>N-formimidoyl-L-glutamate</name>
        <dbReference type="ChEBI" id="CHEBI:58928"/>
    </ligand>
</feature>
<feature type="binding site" evidence="1">
    <location>
        <position position="315"/>
    </location>
    <ligand>
        <name>N-formimidoyl-L-glutamate</name>
        <dbReference type="ChEBI" id="CHEBI:58928"/>
    </ligand>
</feature>
<feature type="binding site" evidence="1">
    <location>
        <position position="316"/>
    </location>
    <ligand>
        <name>4-imidazolone-5-propanoate</name>
        <dbReference type="ChEBI" id="CHEBI:77893"/>
    </ligand>
</feature>
<dbReference type="EC" id="3.5.2.7" evidence="1"/>
<dbReference type="EMBL" id="CP001182">
    <property type="protein sequence ID" value="ACJ43208.1"/>
    <property type="molecule type" value="Genomic_DNA"/>
</dbReference>
<dbReference type="RefSeq" id="WP_000737789.1">
    <property type="nucleotide sequence ID" value="NC_011586.2"/>
</dbReference>
<dbReference type="SMR" id="B7I268"/>
<dbReference type="KEGG" id="abn:AB57_3857"/>
<dbReference type="HOGENOM" id="CLU_041647_0_0_6"/>
<dbReference type="UniPathway" id="UPA00379">
    <property type="reaction ID" value="UER00551"/>
</dbReference>
<dbReference type="Proteomes" id="UP000007094">
    <property type="component" value="Chromosome"/>
</dbReference>
<dbReference type="GO" id="GO:0005737">
    <property type="term" value="C:cytoplasm"/>
    <property type="evidence" value="ECO:0007669"/>
    <property type="project" value="UniProtKB-SubCell"/>
</dbReference>
<dbReference type="GO" id="GO:0050480">
    <property type="term" value="F:imidazolonepropionase activity"/>
    <property type="evidence" value="ECO:0007669"/>
    <property type="project" value="UniProtKB-UniRule"/>
</dbReference>
<dbReference type="GO" id="GO:0005506">
    <property type="term" value="F:iron ion binding"/>
    <property type="evidence" value="ECO:0007669"/>
    <property type="project" value="UniProtKB-UniRule"/>
</dbReference>
<dbReference type="GO" id="GO:0008270">
    <property type="term" value="F:zinc ion binding"/>
    <property type="evidence" value="ECO:0007669"/>
    <property type="project" value="UniProtKB-UniRule"/>
</dbReference>
<dbReference type="GO" id="GO:0019556">
    <property type="term" value="P:L-histidine catabolic process to glutamate and formamide"/>
    <property type="evidence" value="ECO:0007669"/>
    <property type="project" value="UniProtKB-UniPathway"/>
</dbReference>
<dbReference type="GO" id="GO:0019557">
    <property type="term" value="P:L-histidine catabolic process to glutamate and formate"/>
    <property type="evidence" value="ECO:0007669"/>
    <property type="project" value="UniProtKB-UniPathway"/>
</dbReference>
<dbReference type="CDD" id="cd01296">
    <property type="entry name" value="Imidazolone-5PH"/>
    <property type="match status" value="1"/>
</dbReference>
<dbReference type="FunFam" id="3.20.20.140:FF:000007">
    <property type="entry name" value="Imidazolonepropionase"/>
    <property type="match status" value="1"/>
</dbReference>
<dbReference type="Gene3D" id="3.20.20.140">
    <property type="entry name" value="Metal-dependent hydrolases"/>
    <property type="match status" value="1"/>
</dbReference>
<dbReference type="Gene3D" id="2.30.40.10">
    <property type="entry name" value="Urease, subunit C, domain 1"/>
    <property type="match status" value="1"/>
</dbReference>
<dbReference type="HAMAP" id="MF_00372">
    <property type="entry name" value="HutI"/>
    <property type="match status" value="1"/>
</dbReference>
<dbReference type="InterPro" id="IPR006680">
    <property type="entry name" value="Amidohydro-rel"/>
</dbReference>
<dbReference type="InterPro" id="IPR005920">
    <property type="entry name" value="HutI"/>
</dbReference>
<dbReference type="InterPro" id="IPR011059">
    <property type="entry name" value="Metal-dep_hydrolase_composite"/>
</dbReference>
<dbReference type="InterPro" id="IPR032466">
    <property type="entry name" value="Metal_Hydrolase"/>
</dbReference>
<dbReference type="NCBIfam" id="TIGR01224">
    <property type="entry name" value="hutI"/>
    <property type="match status" value="1"/>
</dbReference>
<dbReference type="PANTHER" id="PTHR42752">
    <property type="entry name" value="IMIDAZOLONEPROPIONASE"/>
    <property type="match status" value="1"/>
</dbReference>
<dbReference type="PANTHER" id="PTHR42752:SF1">
    <property type="entry name" value="IMIDAZOLONEPROPIONASE-RELATED"/>
    <property type="match status" value="1"/>
</dbReference>
<dbReference type="Pfam" id="PF01979">
    <property type="entry name" value="Amidohydro_1"/>
    <property type="match status" value="1"/>
</dbReference>
<dbReference type="SUPFAM" id="SSF51338">
    <property type="entry name" value="Composite domain of metallo-dependent hydrolases"/>
    <property type="match status" value="1"/>
</dbReference>
<dbReference type="SUPFAM" id="SSF51556">
    <property type="entry name" value="Metallo-dependent hydrolases"/>
    <property type="match status" value="1"/>
</dbReference>
<reference key="1">
    <citation type="journal article" date="2008" name="J. Bacteriol.">
        <title>Comparative genome sequence analysis of multidrug-resistant Acinetobacter baumannii.</title>
        <authorList>
            <person name="Adams M.D."/>
            <person name="Goglin K."/>
            <person name="Molyneaux N."/>
            <person name="Hujer K.M."/>
            <person name="Lavender H."/>
            <person name="Jamison J.J."/>
            <person name="MacDonald I.J."/>
            <person name="Martin K.M."/>
            <person name="Russo T."/>
            <person name="Campagnari A.A."/>
            <person name="Hujer A.M."/>
            <person name="Bonomo R.A."/>
            <person name="Gill S.R."/>
        </authorList>
    </citation>
    <scope>NUCLEOTIDE SEQUENCE [LARGE SCALE GENOMIC DNA]</scope>
    <source>
        <strain>AB0057</strain>
    </source>
</reference>
<protein>
    <recommendedName>
        <fullName evidence="1">Imidazolonepropionase</fullName>
        <ecNumber evidence="1">3.5.2.7</ecNumber>
    </recommendedName>
    <alternativeName>
        <fullName evidence="1">Imidazolone-5-propionate hydrolase</fullName>
    </alternativeName>
</protein>